<keyword id="KW-0496">Mitochondrion</keyword>
<keyword id="KW-0507">mRNA processing</keyword>
<keyword id="KW-0508">mRNA splicing</keyword>
<keyword id="KW-1185">Reference proteome</keyword>
<keyword id="KW-0677">Repeat</keyword>
<keyword id="KW-0809">Transit peptide</keyword>
<comment type="function">
    <text evidence="1">Regulates mitochondrial small subunit maturation by controlling 15S rRNA 5'-end processing. Localizes to the 5' precursor of the 15S rRNA in a position that is subsequently occupied by mS47 in the mature yeast mtSSU. Uses structure and sequence-specific RNA recognition, binding to a single-stranded region of the precursor and specifically recognizing bases -6 to -1. The exchange of Ccm1 for mS47 is coupled to the irreversible removal of precursor rRNA that is accompanied by conformational changes of the mitoribosomal proteins uS5m and mS26. These conformational changes signal completion of 5'-end rRNA processing through protection of the mature 5'-end of the 15S rRNA and stabilization of mS47. The removal of the 5' precursor together with the dissociation of Ccm1 may be catalyzed by the 5'-3' exoribonuclease Pet127. Involved in the specific removal of group I introns in mitochondrial encoded transcripts.</text>
</comment>
<comment type="subunit">
    <text evidence="1">Binds to mitochondrial small subunit 15S rRNA.</text>
</comment>
<comment type="subcellular location">
    <subcellularLocation>
        <location evidence="1">Mitochondrion</location>
    </subcellularLocation>
</comment>
<comment type="miscellaneous">
    <text evidence="1">Involved in mitochondrial-nuclear incompatibility, a major determinant in reproductive isolation between species, through hybrid incompatibility of Ccm1 and its interacting partner 15S rRNA between yeast species.</text>
</comment>
<comment type="similarity">
    <text evidence="5">Belongs to the CCM1 family.</text>
</comment>
<reference key="1">
    <citation type="journal article" date="2009" name="Nature">
        <title>Evolution of pathogenicity and sexual reproduction in eight Candida genomes.</title>
        <authorList>
            <person name="Butler G."/>
            <person name="Rasmussen M.D."/>
            <person name="Lin M.F."/>
            <person name="Santos M.A.S."/>
            <person name="Sakthikumar S."/>
            <person name="Munro C.A."/>
            <person name="Rheinbay E."/>
            <person name="Grabherr M."/>
            <person name="Forche A."/>
            <person name="Reedy J.L."/>
            <person name="Agrafioti I."/>
            <person name="Arnaud M.B."/>
            <person name="Bates S."/>
            <person name="Brown A.J.P."/>
            <person name="Brunke S."/>
            <person name="Costanzo M.C."/>
            <person name="Fitzpatrick D.A."/>
            <person name="de Groot P.W.J."/>
            <person name="Harris D."/>
            <person name="Hoyer L.L."/>
            <person name="Hube B."/>
            <person name="Klis F.M."/>
            <person name="Kodira C."/>
            <person name="Lennard N."/>
            <person name="Logue M.E."/>
            <person name="Martin R."/>
            <person name="Neiman A.M."/>
            <person name="Nikolaou E."/>
            <person name="Quail M.A."/>
            <person name="Quinn J."/>
            <person name="Santos M.C."/>
            <person name="Schmitzberger F.F."/>
            <person name="Sherlock G."/>
            <person name="Shah P."/>
            <person name="Silverstein K.A.T."/>
            <person name="Skrzypek M.S."/>
            <person name="Soll D."/>
            <person name="Staggs R."/>
            <person name="Stansfield I."/>
            <person name="Stumpf M.P.H."/>
            <person name="Sudbery P.E."/>
            <person name="Srikantha T."/>
            <person name="Zeng Q."/>
            <person name="Berman J."/>
            <person name="Berriman M."/>
            <person name="Heitman J."/>
            <person name="Gow N.A.R."/>
            <person name="Lorenz M.C."/>
            <person name="Birren B.W."/>
            <person name="Kellis M."/>
            <person name="Cuomo C.A."/>
        </authorList>
    </citation>
    <scope>NUCLEOTIDE SEQUENCE [LARGE SCALE GENOMIC DNA]</scope>
    <source>
        <strain>ATCC 6260 / CBS 566 / DSM 6381 / JCM 1539 / NBRC 10279 / NRRL Y-324</strain>
    </source>
</reference>
<feature type="transit peptide" description="Mitochondrion" evidence="2">
    <location>
        <begin position="1"/>
        <end position="38"/>
    </location>
</feature>
<feature type="chain" id="PRO_0000402265" description="Mitochondrial 15S rRNA processing factor CCM1">
    <location>
        <begin position="39"/>
        <end position="644"/>
    </location>
</feature>
<feature type="repeat" description="PPR 1" evidence="3">
    <location>
        <begin position="245"/>
        <end position="279"/>
    </location>
</feature>
<feature type="repeat" description="PPR 2" evidence="3">
    <location>
        <begin position="280"/>
        <end position="315"/>
    </location>
</feature>
<feature type="repeat" description="PPR 3" evidence="3">
    <location>
        <begin position="318"/>
        <end position="352"/>
    </location>
</feature>
<feature type="region of interest" description="Disordered" evidence="4">
    <location>
        <begin position="78"/>
        <end position="108"/>
    </location>
</feature>
<feature type="compositionally biased region" description="Polar residues" evidence="4">
    <location>
        <begin position="89"/>
        <end position="108"/>
    </location>
</feature>
<gene>
    <name type="primary">CCM1</name>
    <name type="ORF">PGUG_00178</name>
</gene>
<evidence type="ECO:0000250" key="1">
    <source>
        <dbReference type="UniProtKB" id="P48237"/>
    </source>
</evidence>
<evidence type="ECO:0000255" key="2"/>
<evidence type="ECO:0000255" key="3">
    <source>
        <dbReference type="PROSITE-ProRule" id="PRU00708"/>
    </source>
</evidence>
<evidence type="ECO:0000256" key="4">
    <source>
        <dbReference type="SAM" id="MobiDB-lite"/>
    </source>
</evidence>
<evidence type="ECO:0000305" key="5"/>
<dbReference type="EMBL" id="CH408155">
    <property type="protein sequence ID" value="EDK36080.2"/>
    <property type="molecule type" value="Genomic_DNA"/>
</dbReference>
<dbReference type="RefSeq" id="XP_001486801.1">
    <property type="nucleotide sequence ID" value="XM_001486751.1"/>
</dbReference>
<dbReference type="SMR" id="A5DA73"/>
<dbReference type="FunCoup" id="A5DA73">
    <property type="interactions" value="117"/>
</dbReference>
<dbReference type="STRING" id="294746.A5DA73"/>
<dbReference type="GeneID" id="5129538"/>
<dbReference type="KEGG" id="pgu:PGUG_00178"/>
<dbReference type="VEuPathDB" id="FungiDB:PGUG_00178"/>
<dbReference type="eggNOG" id="ENOG502QUX2">
    <property type="taxonomic scope" value="Eukaryota"/>
</dbReference>
<dbReference type="HOGENOM" id="CLU_019745_0_0_1"/>
<dbReference type="InParanoid" id="A5DA73"/>
<dbReference type="OMA" id="ESSAIWA"/>
<dbReference type="OrthoDB" id="185373at2759"/>
<dbReference type="Proteomes" id="UP000001997">
    <property type="component" value="Unassembled WGS sequence"/>
</dbReference>
<dbReference type="GO" id="GO:0005739">
    <property type="term" value="C:mitochondrion"/>
    <property type="evidence" value="ECO:0007669"/>
    <property type="project" value="UniProtKB-SubCell"/>
</dbReference>
<dbReference type="GO" id="GO:0003729">
    <property type="term" value="F:mRNA binding"/>
    <property type="evidence" value="ECO:0007669"/>
    <property type="project" value="TreeGrafter"/>
</dbReference>
<dbReference type="GO" id="GO:0007005">
    <property type="term" value="P:mitochondrion organization"/>
    <property type="evidence" value="ECO:0007669"/>
    <property type="project" value="TreeGrafter"/>
</dbReference>
<dbReference type="GO" id="GO:0006397">
    <property type="term" value="P:mRNA processing"/>
    <property type="evidence" value="ECO:0007669"/>
    <property type="project" value="UniProtKB-KW"/>
</dbReference>
<dbReference type="GO" id="GO:0008380">
    <property type="term" value="P:RNA splicing"/>
    <property type="evidence" value="ECO:0007669"/>
    <property type="project" value="UniProtKB-KW"/>
</dbReference>
<dbReference type="Gene3D" id="1.25.40.10">
    <property type="entry name" value="Tetratricopeptide repeat domain"/>
    <property type="match status" value="1"/>
</dbReference>
<dbReference type="InterPro" id="IPR051114">
    <property type="entry name" value="Mito_RNA_Proc_CCM1"/>
</dbReference>
<dbReference type="InterPro" id="IPR002885">
    <property type="entry name" value="Pentatricopeptide_rpt"/>
</dbReference>
<dbReference type="InterPro" id="IPR033443">
    <property type="entry name" value="PROP1-like_PPR_dom"/>
</dbReference>
<dbReference type="InterPro" id="IPR011990">
    <property type="entry name" value="TPR-like_helical_dom_sf"/>
</dbReference>
<dbReference type="NCBIfam" id="TIGR00756">
    <property type="entry name" value="PPR"/>
    <property type="match status" value="2"/>
</dbReference>
<dbReference type="PANTHER" id="PTHR47934:SF6">
    <property type="entry name" value="MITOCHONDRIAL GROUP I INTRON SPLICING FACTOR CCM1-RELATED"/>
    <property type="match status" value="1"/>
</dbReference>
<dbReference type="PANTHER" id="PTHR47934">
    <property type="entry name" value="PENTATRICOPEPTIDE REPEAT-CONTAINING PROTEIN PET309, MITOCHONDRIAL"/>
    <property type="match status" value="1"/>
</dbReference>
<dbReference type="Pfam" id="PF13812">
    <property type="entry name" value="PPR_3"/>
    <property type="match status" value="1"/>
</dbReference>
<dbReference type="Pfam" id="PF17177">
    <property type="entry name" value="PPR_long"/>
    <property type="match status" value="1"/>
</dbReference>
<dbReference type="PROSITE" id="PS51375">
    <property type="entry name" value="PPR"/>
    <property type="match status" value="3"/>
</dbReference>
<organism>
    <name type="scientific">Meyerozyma guilliermondii (strain ATCC 6260 / CBS 566 / DSM 6381 / JCM 1539 / NBRC 10279 / NRRL Y-324)</name>
    <name type="common">Yeast</name>
    <name type="synonym">Candida guilliermondii</name>
    <dbReference type="NCBI Taxonomy" id="294746"/>
    <lineage>
        <taxon>Eukaryota</taxon>
        <taxon>Fungi</taxon>
        <taxon>Dikarya</taxon>
        <taxon>Ascomycota</taxon>
        <taxon>Saccharomycotina</taxon>
        <taxon>Pichiomycetes</taxon>
        <taxon>Debaryomycetaceae</taxon>
        <taxon>Meyerozyma</taxon>
    </lineage>
</organism>
<protein>
    <recommendedName>
        <fullName>Mitochondrial 15S rRNA processing factor CCM1</fullName>
    </recommendedName>
</protein>
<accession>A5DA73</accession>
<sequence length="644" mass="73477">MVIVASSNMLRPDRIWLCGKYQTARTLYVVGNKSKRRNPSLEDWARSDSDRKMKLQQQEYNRKLKELKNLTANVSKMISKKSEKEVERSQIQSTEPSPETSTQLTQKNDSQRLDFLAKKSLFIPVVDIPASVSDRIGLAFKYLVSKSSQNWSMVLDQLEKNGGFKDIPSKDIRKFVYQIPKPHIPPIISRLKKMHHDAGVPVSPKLVNVFIDSLLLSPSIPSSVMSQIESYCDSIRSTSKKGRLPRETYELLIRAYGKNSNLEMVNSILTEMKQVGLQPSKNTFENILATSVYKSKDHKQAVEVFDTMKFLSDKTKPAERAYRDIIVSYVNNDDIEKALDLYNEMVENKVEVSQQIMVALARGCISRPELKVKAWEFIFEIYNQKWEPTIQTLEYVLYLAAKDGDVALCRALVNKLSETSSVTVRSFSFLLLGYSKSSLYNESPSIPPILAHENGIRFRRNILADSSYAPSSESSLPFLPVLDLVTEKEILAESSAMWAYANTIRPDLINIESANTYLNIGAKFGSLKEFLDRYNSATLLDRQGVPDTRVIEDENLAEVSVMDYTSTASVRSPLLDRNHTLKVPRDDMTYLIALKAASKARNYEFSQEVWSERGLYRKSDRIRLSQEQKRTNLIFNLQSLWSQL</sequence>
<proteinExistence type="inferred from homology"/>
<name>CCM1_PICGU</name>